<name>RS3_BURA4</name>
<reference key="1">
    <citation type="submission" date="2008-04" db="EMBL/GenBank/DDBJ databases">
        <title>Complete sequence of chromosome 1 of Burkholderia ambifaria MC40-6.</title>
        <authorList>
            <person name="Copeland A."/>
            <person name="Lucas S."/>
            <person name="Lapidus A."/>
            <person name="Glavina del Rio T."/>
            <person name="Dalin E."/>
            <person name="Tice H."/>
            <person name="Pitluck S."/>
            <person name="Chain P."/>
            <person name="Malfatti S."/>
            <person name="Shin M."/>
            <person name="Vergez L."/>
            <person name="Lang D."/>
            <person name="Schmutz J."/>
            <person name="Larimer F."/>
            <person name="Land M."/>
            <person name="Hauser L."/>
            <person name="Kyrpides N."/>
            <person name="Lykidis A."/>
            <person name="Ramette A."/>
            <person name="Konstantinidis K."/>
            <person name="Tiedje J."/>
            <person name="Richardson P."/>
        </authorList>
    </citation>
    <scope>NUCLEOTIDE SEQUENCE [LARGE SCALE GENOMIC DNA]</scope>
    <source>
        <strain>MC40-6</strain>
    </source>
</reference>
<dbReference type="EMBL" id="CP001025">
    <property type="protein sequence ID" value="ACB62783.1"/>
    <property type="molecule type" value="Genomic_DNA"/>
</dbReference>
<dbReference type="RefSeq" id="WP_006482899.1">
    <property type="nucleotide sequence ID" value="NC_010551.1"/>
</dbReference>
<dbReference type="SMR" id="B1YRD6"/>
<dbReference type="GeneID" id="98107154"/>
<dbReference type="KEGG" id="bac:BamMC406_0282"/>
<dbReference type="HOGENOM" id="CLU_058591_0_2_4"/>
<dbReference type="OrthoDB" id="9806396at2"/>
<dbReference type="Proteomes" id="UP000001680">
    <property type="component" value="Chromosome 1"/>
</dbReference>
<dbReference type="GO" id="GO:0022627">
    <property type="term" value="C:cytosolic small ribosomal subunit"/>
    <property type="evidence" value="ECO:0007669"/>
    <property type="project" value="TreeGrafter"/>
</dbReference>
<dbReference type="GO" id="GO:0003729">
    <property type="term" value="F:mRNA binding"/>
    <property type="evidence" value="ECO:0007669"/>
    <property type="project" value="UniProtKB-UniRule"/>
</dbReference>
<dbReference type="GO" id="GO:0019843">
    <property type="term" value="F:rRNA binding"/>
    <property type="evidence" value="ECO:0007669"/>
    <property type="project" value="UniProtKB-UniRule"/>
</dbReference>
<dbReference type="GO" id="GO:0003735">
    <property type="term" value="F:structural constituent of ribosome"/>
    <property type="evidence" value="ECO:0007669"/>
    <property type="project" value="InterPro"/>
</dbReference>
<dbReference type="GO" id="GO:0006412">
    <property type="term" value="P:translation"/>
    <property type="evidence" value="ECO:0007669"/>
    <property type="project" value="UniProtKB-UniRule"/>
</dbReference>
<dbReference type="CDD" id="cd02412">
    <property type="entry name" value="KH-II_30S_S3"/>
    <property type="match status" value="1"/>
</dbReference>
<dbReference type="FunFam" id="3.30.1140.32:FF:000006">
    <property type="entry name" value="30S ribosomal protein S3"/>
    <property type="match status" value="1"/>
</dbReference>
<dbReference type="FunFam" id="3.30.300.20:FF:000001">
    <property type="entry name" value="30S ribosomal protein S3"/>
    <property type="match status" value="1"/>
</dbReference>
<dbReference type="Gene3D" id="3.30.300.20">
    <property type="match status" value="1"/>
</dbReference>
<dbReference type="Gene3D" id="3.30.1140.32">
    <property type="entry name" value="Ribosomal protein S3, C-terminal domain"/>
    <property type="match status" value="1"/>
</dbReference>
<dbReference type="HAMAP" id="MF_01309_B">
    <property type="entry name" value="Ribosomal_uS3_B"/>
    <property type="match status" value="1"/>
</dbReference>
<dbReference type="InterPro" id="IPR004087">
    <property type="entry name" value="KH_dom"/>
</dbReference>
<dbReference type="InterPro" id="IPR015946">
    <property type="entry name" value="KH_dom-like_a/b"/>
</dbReference>
<dbReference type="InterPro" id="IPR004044">
    <property type="entry name" value="KH_dom_type_2"/>
</dbReference>
<dbReference type="InterPro" id="IPR009019">
    <property type="entry name" value="KH_sf_prok-type"/>
</dbReference>
<dbReference type="InterPro" id="IPR036419">
    <property type="entry name" value="Ribosomal_S3_C_sf"/>
</dbReference>
<dbReference type="InterPro" id="IPR005704">
    <property type="entry name" value="Ribosomal_uS3_bac-typ"/>
</dbReference>
<dbReference type="InterPro" id="IPR001351">
    <property type="entry name" value="Ribosomal_uS3_C"/>
</dbReference>
<dbReference type="InterPro" id="IPR018280">
    <property type="entry name" value="Ribosomal_uS3_CS"/>
</dbReference>
<dbReference type="NCBIfam" id="TIGR01009">
    <property type="entry name" value="rpsC_bact"/>
    <property type="match status" value="1"/>
</dbReference>
<dbReference type="PANTHER" id="PTHR11760">
    <property type="entry name" value="30S/40S RIBOSOMAL PROTEIN S3"/>
    <property type="match status" value="1"/>
</dbReference>
<dbReference type="PANTHER" id="PTHR11760:SF19">
    <property type="entry name" value="SMALL RIBOSOMAL SUBUNIT PROTEIN US3C"/>
    <property type="match status" value="1"/>
</dbReference>
<dbReference type="Pfam" id="PF07650">
    <property type="entry name" value="KH_2"/>
    <property type="match status" value="1"/>
</dbReference>
<dbReference type="Pfam" id="PF00189">
    <property type="entry name" value="Ribosomal_S3_C"/>
    <property type="match status" value="1"/>
</dbReference>
<dbReference type="SMART" id="SM00322">
    <property type="entry name" value="KH"/>
    <property type="match status" value="1"/>
</dbReference>
<dbReference type="SUPFAM" id="SSF54814">
    <property type="entry name" value="Prokaryotic type KH domain (KH-domain type II)"/>
    <property type="match status" value="1"/>
</dbReference>
<dbReference type="SUPFAM" id="SSF54821">
    <property type="entry name" value="Ribosomal protein S3 C-terminal domain"/>
    <property type="match status" value="1"/>
</dbReference>
<dbReference type="PROSITE" id="PS50823">
    <property type="entry name" value="KH_TYPE_2"/>
    <property type="match status" value="1"/>
</dbReference>
<dbReference type="PROSITE" id="PS00548">
    <property type="entry name" value="RIBOSOMAL_S3"/>
    <property type="match status" value="1"/>
</dbReference>
<gene>
    <name evidence="1" type="primary">rpsC</name>
    <name type="ordered locus">BamMC406_0282</name>
</gene>
<evidence type="ECO:0000255" key="1">
    <source>
        <dbReference type="HAMAP-Rule" id="MF_01309"/>
    </source>
</evidence>
<evidence type="ECO:0000256" key="2">
    <source>
        <dbReference type="SAM" id="MobiDB-lite"/>
    </source>
</evidence>
<evidence type="ECO:0000305" key="3"/>
<proteinExistence type="inferred from homology"/>
<comment type="function">
    <text evidence="1">Binds the lower part of the 30S subunit head. Binds mRNA in the 70S ribosome, positioning it for translation.</text>
</comment>
<comment type="subunit">
    <text evidence="1">Part of the 30S ribosomal subunit. Forms a tight complex with proteins S10 and S14.</text>
</comment>
<comment type="similarity">
    <text evidence="1">Belongs to the universal ribosomal protein uS3 family.</text>
</comment>
<feature type="chain" id="PRO_1000140930" description="Small ribosomal subunit protein uS3">
    <location>
        <begin position="1"/>
        <end position="266"/>
    </location>
</feature>
<feature type="domain" description="KH type-2" evidence="1">
    <location>
        <begin position="39"/>
        <end position="107"/>
    </location>
</feature>
<feature type="region of interest" description="Disordered" evidence="2">
    <location>
        <begin position="218"/>
        <end position="266"/>
    </location>
</feature>
<feature type="compositionally biased region" description="Basic and acidic residues" evidence="2">
    <location>
        <begin position="230"/>
        <end position="241"/>
    </location>
</feature>
<feature type="compositionally biased region" description="Basic and acidic residues" evidence="2">
    <location>
        <begin position="257"/>
        <end position="266"/>
    </location>
</feature>
<organism>
    <name type="scientific">Burkholderia ambifaria (strain MC40-6)</name>
    <dbReference type="NCBI Taxonomy" id="398577"/>
    <lineage>
        <taxon>Bacteria</taxon>
        <taxon>Pseudomonadati</taxon>
        <taxon>Pseudomonadota</taxon>
        <taxon>Betaproteobacteria</taxon>
        <taxon>Burkholderiales</taxon>
        <taxon>Burkholderiaceae</taxon>
        <taxon>Burkholderia</taxon>
        <taxon>Burkholderia cepacia complex</taxon>
    </lineage>
</organism>
<accession>B1YRD6</accession>
<keyword id="KW-0687">Ribonucleoprotein</keyword>
<keyword id="KW-0689">Ribosomal protein</keyword>
<keyword id="KW-0694">RNA-binding</keyword>
<keyword id="KW-0699">rRNA-binding</keyword>
<sequence length="266" mass="29934">MGQKIHPTGFRLAVSRNWASRWYANNNNFAAMLQEDIGVREYLKKKLKNASVGRVVIERPAKNARITIYSSRPGVVIGKKGEDIEQLKTELQRRMGVPVHVNIEEIRKPETDAQLIADSITQQLERRIMFRRAMKRAMQNAMRLGAQGIKIMSAGRLNGIEIARTEWYREGRVPLHTLRADIDYATSEAKTTYGIIGVKVWVYKGDTLGRNDAPVVEEVAEDKRPRRNARPGDRRPRRDGEGGAPGARRGAPRRGAGKPEDGKTGE</sequence>
<protein>
    <recommendedName>
        <fullName evidence="1">Small ribosomal subunit protein uS3</fullName>
    </recommendedName>
    <alternativeName>
        <fullName evidence="3">30S ribosomal protein S3</fullName>
    </alternativeName>
</protein>